<name>ATPB_YERPY</name>
<organism>
    <name type="scientific">Yersinia pseudotuberculosis serotype O:3 (strain YPIII)</name>
    <dbReference type="NCBI Taxonomy" id="502800"/>
    <lineage>
        <taxon>Bacteria</taxon>
        <taxon>Pseudomonadati</taxon>
        <taxon>Pseudomonadota</taxon>
        <taxon>Gammaproteobacteria</taxon>
        <taxon>Enterobacterales</taxon>
        <taxon>Yersiniaceae</taxon>
        <taxon>Yersinia</taxon>
    </lineage>
</organism>
<comment type="function">
    <text evidence="1">Produces ATP from ADP in the presence of a proton gradient across the membrane. The catalytic sites are hosted primarily by the beta subunits.</text>
</comment>
<comment type="catalytic activity">
    <reaction evidence="1">
        <text>ATP + H2O + 4 H(+)(in) = ADP + phosphate + 5 H(+)(out)</text>
        <dbReference type="Rhea" id="RHEA:57720"/>
        <dbReference type="ChEBI" id="CHEBI:15377"/>
        <dbReference type="ChEBI" id="CHEBI:15378"/>
        <dbReference type="ChEBI" id="CHEBI:30616"/>
        <dbReference type="ChEBI" id="CHEBI:43474"/>
        <dbReference type="ChEBI" id="CHEBI:456216"/>
        <dbReference type="EC" id="7.1.2.2"/>
    </reaction>
</comment>
<comment type="subunit">
    <text evidence="1">F-type ATPases have 2 components, CF(1) - the catalytic core - and CF(0) - the membrane proton channel. CF(1) has five subunits: alpha(3), beta(3), gamma(1), delta(1), epsilon(1). CF(0) has three main subunits: a(1), b(2) and c(9-12). The alpha and beta chains form an alternating ring which encloses part of the gamma chain. CF(1) is attached to CF(0) by a central stalk formed by the gamma and epsilon chains, while a peripheral stalk is formed by the delta and b chains.</text>
</comment>
<comment type="subcellular location">
    <subcellularLocation>
        <location evidence="1">Cell inner membrane</location>
        <topology evidence="1">Peripheral membrane protein</topology>
    </subcellularLocation>
</comment>
<comment type="similarity">
    <text evidence="1">Belongs to the ATPase alpha/beta chains family.</text>
</comment>
<keyword id="KW-0066">ATP synthesis</keyword>
<keyword id="KW-0067">ATP-binding</keyword>
<keyword id="KW-0997">Cell inner membrane</keyword>
<keyword id="KW-1003">Cell membrane</keyword>
<keyword id="KW-0139">CF(1)</keyword>
<keyword id="KW-0375">Hydrogen ion transport</keyword>
<keyword id="KW-0406">Ion transport</keyword>
<keyword id="KW-0472">Membrane</keyword>
<keyword id="KW-0547">Nucleotide-binding</keyword>
<keyword id="KW-1278">Translocase</keyword>
<keyword id="KW-0813">Transport</keyword>
<dbReference type="EC" id="7.1.2.2" evidence="1"/>
<dbReference type="EMBL" id="CP000950">
    <property type="protein sequence ID" value="ACA70482.1"/>
    <property type="molecule type" value="Genomic_DNA"/>
</dbReference>
<dbReference type="RefSeq" id="WP_002220753.1">
    <property type="nucleotide sequence ID" value="NZ_CP009792.1"/>
</dbReference>
<dbReference type="SMR" id="B1JRN2"/>
<dbReference type="GeneID" id="57974603"/>
<dbReference type="KEGG" id="ypy:YPK_4226"/>
<dbReference type="PATRIC" id="fig|502800.11.peg.576"/>
<dbReference type="GO" id="GO:0005886">
    <property type="term" value="C:plasma membrane"/>
    <property type="evidence" value="ECO:0007669"/>
    <property type="project" value="UniProtKB-SubCell"/>
</dbReference>
<dbReference type="GO" id="GO:0045259">
    <property type="term" value="C:proton-transporting ATP synthase complex"/>
    <property type="evidence" value="ECO:0007669"/>
    <property type="project" value="UniProtKB-KW"/>
</dbReference>
<dbReference type="GO" id="GO:0005524">
    <property type="term" value="F:ATP binding"/>
    <property type="evidence" value="ECO:0007669"/>
    <property type="project" value="UniProtKB-UniRule"/>
</dbReference>
<dbReference type="GO" id="GO:0016887">
    <property type="term" value="F:ATP hydrolysis activity"/>
    <property type="evidence" value="ECO:0007669"/>
    <property type="project" value="InterPro"/>
</dbReference>
<dbReference type="GO" id="GO:0046933">
    <property type="term" value="F:proton-transporting ATP synthase activity, rotational mechanism"/>
    <property type="evidence" value="ECO:0007669"/>
    <property type="project" value="UniProtKB-UniRule"/>
</dbReference>
<dbReference type="CDD" id="cd18110">
    <property type="entry name" value="ATP-synt_F1_beta_C"/>
    <property type="match status" value="1"/>
</dbReference>
<dbReference type="CDD" id="cd18115">
    <property type="entry name" value="ATP-synt_F1_beta_N"/>
    <property type="match status" value="1"/>
</dbReference>
<dbReference type="CDD" id="cd01133">
    <property type="entry name" value="F1-ATPase_beta_CD"/>
    <property type="match status" value="1"/>
</dbReference>
<dbReference type="FunFam" id="1.10.1140.10:FF:000001">
    <property type="entry name" value="ATP synthase subunit beta"/>
    <property type="match status" value="1"/>
</dbReference>
<dbReference type="FunFam" id="2.40.10.170:FF:000003">
    <property type="entry name" value="ATP synthase subunit beta"/>
    <property type="match status" value="1"/>
</dbReference>
<dbReference type="FunFam" id="3.40.50.300:FF:000004">
    <property type="entry name" value="ATP synthase subunit beta"/>
    <property type="match status" value="1"/>
</dbReference>
<dbReference type="Gene3D" id="2.40.10.170">
    <property type="match status" value="1"/>
</dbReference>
<dbReference type="Gene3D" id="1.10.1140.10">
    <property type="entry name" value="Bovine Mitochondrial F1-atpase, Atp Synthase Beta Chain, Chain D, domain 3"/>
    <property type="match status" value="1"/>
</dbReference>
<dbReference type="Gene3D" id="3.40.50.300">
    <property type="entry name" value="P-loop containing nucleotide triphosphate hydrolases"/>
    <property type="match status" value="1"/>
</dbReference>
<dbReference type="HAMAP" id="MF_01347">
    <property type="entry name" value="ATP_synth_beta_bact"/>
    <property type="match status" value="1"/>
</dbReference>
<dbReference type="InterPro" id="IPR003593">
    <property type="entry name" value="AAA+_ATPase"/>
</dbReference>
<dbReference type="InterPro" id="IPR055190">
    <property type="entry name" value="ATP-synt_VA_C"/>
</dbReference>
<dbReference type="InterPro" id="IPR005722">
    <property type="entry name" value="ATP_synth_F1_bsu"/>
</dbReference>
<dbReference type="InterPro" id="IPR020003">
    <property type="entry name" value="ATPase_a/bsu_AS"/>
</dbReference>
<dbReference type="InterPro" id="IPR050053">
    <property type="entry name" value="ATPase_alpha/beta_chains"/>
</dbReference>
<dbReference type="InterPro" id="IPR004100">
    <property type="entry name" value="ATPase_F1/V1/A1_a/bsu_N"/>
</dbReference>
<dbReference type="InterPro" id="IPR036121">
    <property type="entry name" value="ATPase_F1/V1/A1_a/bsu_N_sf"/>
</dbReference>
<dbReference type="InterPro" id="IPR000194">
    <property type="entry name" value="ATPase_F1/V1/A1_a/bsu_nucl-bd"/>
</dbReference>
<dbReference type="InterPro" id="IPR024034">
    <property type="entry name" value="ATPase_F1/V1_b/a_C"/>
</dbReference>
<dbReference type="InterPro" id="IPR027417">
    <property type="entry name" value="P-loop_NTPase"/>
</dbReference>
<dbReference type="NCBIfam" id="TIGR01039">
    <property type="entry name" value="atpD"/>
    <property type="match status" value="1"/>
</dbReference>
<dbReference type="PANTHER" id="PTHR15184">
    <property type="entry name" value="ATP SYNTHASE"/>
    <property type="match status" value="1"/>
</dbReference>
<dbReference type="PANTHER" id="PTHR15184:SF71">
    <property type="entry name" value="ATP SYNTHASE SUBUNIT BETA, MITOCHONDRIAL"/>
    <property type="match status" value="1"/>
</dbReference>
<dbReference type="Pfam" id="PF00006">
    <property type="entry name" value="ATP-synt_ab"/>
    <property type="match status" value="1"/>
</dbReference>
<dbReference type="Pfam" id="PF02874">
    <property type="entry name" value="ATP-synt_ab_N"/>
    <property type="match status" value="1"/>
</dbReference>
<dbReference type="Pfam" id="PF22919">
    <property type="entry name" value="ATP-synt_VA_C"/>
    <property type="match status" value="1"/>
</dbReference>
<dbReference type="SMART" id="SM00382">
    <property type="entry name" value="AAA"/>
    <property type="match status" value="1"/>
</dbReference>
<dbReference type="SUPFAM" id="SSF47917">
    <property type="entry name" value="C-terminal domain of alpha and beta subunits of F1 ATP synthase"/>
    <property type="match status" value="1"/>
</dbReference>
<dbReference type="SUPFAM" id="SSF50615">
    <property type="entry name" value="N-terminal domain of alpha and beta subunits of F1 ATP synthase"/>
    <property type="match status" value="1"/>
</dbReference>
<dbReference type="SUPFAM" id="SSF52540">
    <property type="entry name" value="P-loop containing nucleoside triphosphate hydrolases"/>
    <property type="match status" value="1"/>
</dbReference>
<dbReference type="PROSITE" id="PS00152">
    <property type="entry name" value="ATPASE_ALPHA_BETA"/>
    <property type="match status" value="1"/>
</dbReference>
<evidence type="ECO:0000255" key="1">
    <source>
        <dbReference type="HAMAP-Rule" id="MF_01347"/>
    </source>
</evidence>
<gene>
    <name evidence="1" type="primary">atpD</name>
    <name type="ordered locus">YPK_4226</name>
</gene>
<feature type="chain" id="PRO_1000143568" description="ATP synthase subunit beta">
    <location>
        <begin position="1"/>
        <end position="460"/>
    </location>
</feature>
<feature type="binding site" evidence="1">
    <location>
        <begin position="150"/>
        <end position="157"/>
    </location>
    <ligand>
        <name>ATP</name>
        <dbReference type="ChEBI" id="CHEBI:30616"/>
    </ligand>
</feature>
<protein>
    <recommendedName>
        <fullName evidence="1">ATP synthase subunit beta</fullName>
        <ecNumber evidence="1">7.1.2.2</ecNumber>
    </recommendedName>
    <alternativeName>
        <fullName evidence="1">ATP synthase F1 sector subunit beta</fullName>
    </alternativeName>
    <alternativeName>
        <fullName evidence="1">F-ATPase subunit beta</fullName>
    </alternativeName>
</protein>
<accession>B1JRN2</accession>
<proteinExistence type="inferred from homology"/>
<reference key="1">
    <citation type="submission" date="2008-02" db="EMBL/GenBank/DDBJ databases">
        <title>Complete sequence of Yersinia pseudotuberculosis YPIII.</title>
        <authorList>
            <consortium name="US DOE Joint Genome Institute"/>
            <person name="Copeland A."/>
            <person name="Lucas S."/>
            <person name="Lapidus A."/>
            <person name="Glavina del Rio T."/>
            <person name="Dalin E."/>
            <person name="Tice H."/>
            <person name="Bruce D."/>
            <person name="Goodwin L."/>
            <person name="Pitluck S."/>
            <person name="Munk A.C."/>
            <person name="Brettin T."/>
            <person name="Detter J.C."/>
            <person name="Han C."/>
            <person name="Tapia R."/>
            <person name="Schmutz J."/>
            <person name="Larimer F."/>
            <person name="Land M."/>
            <person name="Hauser L."/>
            <person name="Challacombe J.F."/>
            <person name="Green L."/>
            <person name="Lindler L.E."/>
            <person name="Nikolich M.P."/>
            <person name="Richardson P."/>
        </authorList>
    </citation>
    <scope>NUCLEOTIDE SEQUENCE [LARGE SCALE GENOMIC DNA]</scope>
    <source>
        <strain>YPIII</strain>
    </source>
</reference>
<sequence>MATGKIIQVIGAVVDVEFPQDAVPKVYNALEVEGTTEKLVLEVQQQLGGGVVRCIAMGSSDGLSRGLKVTNLEHPIEVPVGKATLGRIMNVLGEPIDMKGPIGEEERWAIHREAPSYEELASSQDLLETGIKVMDLICPFAKGGKVGLFGGAGVGKTVNMMELIRNIAIEHSGYSVFAGVGERTREGNDFYHEMTDSNVLDKVSLVYGQMNEPPGNRLRVALTGLTMAEKFRDEGRDVLLFIDNIYRYTLAGTEVSALLGRMPSAVGYQPTLAEEMGVLQERITSTKTGSITSVQAVYVPADDLTDPSPATTFAHLDATVVLSRQIASLGIYPAVDPLDSTSRQLDPLVVGQEHYDVARGVQSILQRYQELKDIIAILGMDELSEDDKLVVSRARKIQRFLSQPFFVAEVFTGSPGKFVSLKDTIRGFKGIMNGDYDHLPEQAFYMVGTIEEAVEKAKKL</sequence>